<feature type="chain" id="PRO_0000294048" description="Coproheme decarboxylase">
    <location>
        <begin position="1"/>
        <end position="250"/>
    </location>
</feature>
<feature type="active site" evidence="1">
    <location>
        <position position="145"/>
    </location>
</feature>
<feature type="binding site" evidence="1">
    <location>
        <position position="131"/>
    </location>
    <ligand>
        <name>Fe-coproporphyrin III</name>
        <dbReference type="ChEBI" id="CHEBI:68438"/>
    </ligand>
</feature>
<feature type="binding site" evidence="1">
    <location>
        <begin position="145"/>
        <end position="149"/>
    </location>
    <ligand>
        <name>Fe-coproporphyrin III</name>
        <dbReference type="ChEBI" id="CHEBI:68438"/>
    </ligand>
</feature>
<feature type="binding site" description="axial binding residue" evidence="1">
    <location>
        <position position="172"/>
    </location>
    <ligand>
        <name>Fe-coproporphyrin III</name>
        <dbReference type="ChEBI" id="CHEBI:68438"/>
    </ligand>
    <ligandPart>
        <name>Fe</name>
        <dbReference type="ChEBI" id="CHEBI:18248"/>
    </ligandPart>
</feature>
<feature type="binding site" evidence="1">
    <location>
        <position position="185"/>
    </location>
    <ligand>
        <name>Fe-coproporphyrin III</name>
        <dbReference type="ChEBI" id="CHEBI:68438"/>
    </ligand>
</feature>
<organism>
    <name type="scientific">Staphylococcus aureus (strain COL)</name>
    <dbReference type="NCBI Taxonomy" id="93062"/>
    <lineage>
        <taxon>Bacteria</taxon>
        <taxon>Bacillati</taxon>
        <taxon>Bacillota</taxon>
        <taxon>Bacilli</taxon>
        <taxon>Bacillales</taxon>
        <taxon>Staphylococcaceae</taxon>
        <taxon>Staphylococcus</taxon>
    </lineage>
</organism>
<sequence>MSQAAETLDGWYSLHLFYAVDWASLRIVPKDERDALVTEFQSFLENTATVRSSKSGDQAIYNITGQKADLLLWFLRPEMKSLNHIENEFNKLRIADFLIPTYSYVSVIELSNYLAGKSDEDPYENPHIKARLYPELPHSDYICFYPMNKRRNETYNWYMLTMEERQKLMYDHGMIGRKYAGKIKQFITGSVGFDDFEWGVTLFSDDVLQFKKIVYEMRFDETTARYGEFGSFFVGHIINTNEFDQFFAIS</sequence>
<gene>
    <name evidence="1" type="primary">chdC</name>
    <name type="ordered locus">SACOL0633</name>
</gene>
<protein>
    <recommendedName>
        <fullName evidence="1">Coproheme decarboxylase</fullName>
        <ecNumber evidence="1">1.3.98.5</ecNumber>
    </recommendedName>
    <alternativeName>
        <fullName evidence="1">Coproheme III oxidative decarboxylase</fullName>
    </alternativeName>
    <alternativeName>
        <fullName evidence="1">Hydrogen peroxide-dependent heme synthase</fullName>
    </alternativeName>
</protein>
<keyword id="KW-0349">Heme</keyword>
<keyword id="KW-0350">Heme biosynthesis</keyword>
<keyword id="KW-0408">Iron</keyword>
<keyword id="KW-0479">Metal-binding</keyword>
<keyword id="KW-0560">Oxidoreductase</keyword>
<name>CHDC_STAAC</name>
<comment type="function">
    <text evidence="1">Involved in coproporphyrin-dependent heme b biosynthesis. Catalyzes the decarboxylation of Fe-coproporphyrin III (coproheme) to heme b (protoheme IX), the last step of the pathway. The reaction occurs in a stepwise manner with a three-propionate intermediate.</text>
</comment>
<comment type="catalytic activity">
    <reaction evidence="1">
        <text>Fe-coproporphyrin III + 2 H2O2 + 2 H(+) = heme b + 2 CO2 + 4 H2O</text>
        <dbReference type="Rhea" id="RHEA:56516"/>
        <dbReference type="ChEBI" id="CHEBI:15377"/>
        <dbReference type="ChEBI" id="CHEBI:15378"/>
        <dbReference type="ChEBI" id="CHEBI:16240"/>
        <dbReference type="ChEBI" id="CHEBI:16526"/>
        <dbReference type="ChEBI" id="CHEBI:60344"/>
        <dbReference type="ChEBI" id="CHEBI:68438"/>
        <dbReference type="EC" id="1.3.98.5"/>
    </reaction>
    <physiologicalReaction direction="left-to-right" evidence="1">
        <dbReference type="Rhea" id="RHEA:56517"/>
    </physiologicalReaction>
</comment>
<comment type="catalytic activity">
    <reaction evidence="1">
        <text>Fe-coproporphyrin III + H2O2 + H(+) = harderoheme III + CO2 + 2 H2O</text>
        <dbReference type="Rhea" id="RHEA:57940"/>
        <dbReference type="ChEBI" id="CHEBI:15377"/>
        <dbReference type="ChEBI" id="CHEBI:15378"/>
        <dbReference type="ChEBI" id="CHEBI:16240"/>
        <dbReference type="ChEBI" id="CHEBI:16526"/>
        <dbReference type="ChEBI" id="CHEBI:68438"/>
        <dbReference type="ChEBI" id="CHEBI:142463"/>
    </reaction>
    <physiologicalReaction direction="left-to-right" evidence="1">
        <dbReference type="Rhea" id="RHEA:57941"/>
    </physiologicalReaction>
</comment>
<comment type="catalytic activity">
    <reaction evidence="1">
        <text>harderoheme III + H2O2 + H(+) = heme b + CO2 + 2 H2O</text>
        <dbReference type="Rhea" id="RHEA:57944"/>
        <dbReference type="ChEBI" id="CHEBI:15377"/>
        <dbReference type="ChEBI" id="CHEBI:15378"/>
        <dbReference type="ChEBI" id="CHEBI:16240"/>
        <dbReference type="ChEBI" id="CHEBI:16526"/>
        <dbReference type="ChEBI" id="CHEBI:60344"/>
        <dbReference type="ChEBI" id="CHEBI:142463"/>
    </reaction>
    <physiologicalReaction direction="left-to-right" evidence="1">
        <dbReference type="Rhea" id="RHEA:57945"/>
    </physiologicalReaction>
</comment>
<comment type="cofactor">
    <cofactor evidence="1">
        <name>Fe-coproporphyrin III</name>
        <dbReference type="ChEBI" id="CHEBI:68438"/>
    </cofactor>
    <text evidence="1">Fe-coproporphyrin III acts both as a substrate and a redox cofactor.</text>
</comment>
<comment type="pathway">
    <text evidence="1">Porphyrin-containing compound metabolism; protoheme biosynthesis.</text>
</comment>
<comment type="similarity">
    <text evidence="1">Belongs to the ChdC family. Type 1 subfamily.</text>
</comment>
<dbReference type="EC" id="1.3.98.5" evidence="1"/>
<dbReference type="EMBL" id="CP000046">
    <property type="protein sequence ID" value="AAW37742.1"/>
    <property type="molecule type" value="Genomic_DNA"/>
</dbReference>
<dbReference type="SMR" id="Q5HI89"/>
<dbReference type="KEGG" id="sac:SACOL0633"/>
<dbReference type="HOGENOM" id="CLU_063226_1_0_9"/>
<dbReference type="UniPathway" id="UPA00252"/>
<dbReference type="Proteomes" id="UP000000530">
    <property type="component" value="Chromosome"/>
</dbReference>
<dbReference type="GO" id="GO:0020037">
    <property type="term" value="F:heme binding"/>
    <property type="evidence" value="ECO:0007669"/>
    <property type="project" value="InterPro"/>
</dbReference>
<dbReference type="GO" id="GO:0046872">
    <property type="term" value="F:metal ion binding"/>
    <property type="evidence" value="ECO:0007669"/>
    <property type="project" value="UniProtKB-KW"/>
</dbReference>
<dbReference type="GO" id="GO:0016634">
    <property type="term" value="F:oxidoreductase activity, acting on the CH-CH group of donors, oxygen as acceptor"/>
    <property type="evidence" value="ECO:0007669"/>
    <property type="project" value="UniProtKB-UniRule"/>
</dbReference>
<dbReference type="GO" id="GO:0004601">
    <property type="term" value="F:peroxidase activity"/>
    <property type="evidence" value="ECO:0007669"/>
    <property type="project" value="InterPro"/>
</dbReference>
<dbReference type="GO" id="GO:0006785">
    <property type="term" value="P:heme B biosynthetic process"/>
    <property type="evidence" value="ECO:0007669"/>
    <property type="project" value="UniProtKB-UniRule"/>
</dbReference>
<dbReference type="Gene3D" id="3.30.70.1030">
    <property type="entry name" value="Apc35880, domain 1"/>
    <property type="match status" value="2"/>
</dbReference>
<dbReference type="HAMAP" id="MF_01442">
    <property type="entry name" value="Coproheme_decarbox_1"/>
    <property type="match status" value="1"/>
</dbReference>
<dbReference type="InterPro" id="IPR031332">
    <property type="entry name" value="CHDC"/>
</dbReference>
<dbReference type="InterPro" id="IPR010644">
    <property type="entry name" value="ChdC/CLD"/>
</dbReference>
<dbReference type="InterPro" id="IPR011008">
    <property type="entry name" value="Dimeric_a/b-barrel"/>
</dbReference>
<dbReference type="NCBIfam" id="NF008913">
    <property type="entry name" value="PRK12276.1"/>
    <property type="match status" value="1"/>
</dbReference>
<dbReference type="PANTHER" id="PTHR36843:SF1">
    <property type="entry name" value="COPROHEME DECARBOXYLASE"/>
    <property type="match status" value="1"/>
</dbReference>
<dbReference type="PANTHER" id="PTHR36843">
    <property type="entry name" value="HEME-DEPENDENT PEROXIDASE YWFI-RELATED"/>
    <property type="match status" value="1"/>
</dbReference>
<dbReference type="Pfam" id="PF06778">
    <property type="entry name" value="Chlor_dismutase"/>
    <property type="match status" value="1"/>
</dbReference>
<dbReference type="SUPFAM" id="SSF54909">
    <property type="entry name" value="Dimeric alpha+beta barrel"/>
    <property type="match status" value="1"/>
</dbReference>
<accession>Q5HI89</accession>
<proteinExistence type="inferred from homology"/>
<reference key="1">
    <citation type="journal article" date="2005" name="J. Bacteriol.">
        <title>Insights on evolution of virulence and resistance from the complete genome analysis of an early methicillin-resistant Staphylococcus aureus strain and a biofilm-producing methicillin-resistant Staphylococcus epidermidis strain.</title>
        <authorList>
            <person name="Gill S.R."/>
            <person name="Fouts D.E."/>
            <person name="Archer G.L."/>
            <person name="Mongodin E.F."/>
            <person name="DeBoy R.T."/>
            <person name="Ravel J."/>
            <person name="Paulsen I.T."/>
            <person name="Kolonay J.F."/>
            <person name="Brinkac L.M."/>
            <person name="Beanan M.J."/>
            <person name="Dodson R.J."/>
            <person name="Daugherty S.C."/>
            <person name="Madupu R."/>
            <person name="Angiuoli S.V."/>
            <person name="Durkin A.S."/>
            <person name="Haft D.H."/>
            <person name="Vamathevan J.J."/>
            <person name="Khouri H."/>
            <person name="Utterback T.R."/>
            <person name="Lee C."/>
            <person name="Dimitrov G."/>
            <person name="Jiang L."/>
            <person name="Qin H."/>
            <person name="Weidman J."/>
            <person name="Tran K."/>
            <person name="Kang K.H."/>
            <person name="Hance I.R."/>
            <person name="Nelson K.E."/>
            <person name="Fraser C.M."/>
        </authorList>
    </citation>
    <scope>NUCLEOTIDE SEQUENCE [LARGE SCALE GENOMIC DNA]</scope>
    <source>
        <strain>COL</strain>
    </source>
</reference>
<evidence type="ECO:0000255" key="1">
    <source>
        <dbReference type="HAMAP-Rule" id="MF_01442"/>
    </source>
</evidence>